<dbReference type="EMBL" id="CP000255">
    <property type="protein sequence ID" value="ABD22511.1"/>
    <property type="molecule type" value="Genomic_DNA"/>
</dbReference>
<dbReference type="RefSeq" id="WP_001142337.1">
    <property type="nucleotide sequence ID" value="NZ_CP027476.1"/>
</dbReference>
<dbReference type="SMR" id="Q2FJ95"/>
<dbReference type="GeneID" id="98344879"/>
<dbReference type="KEGG" id="saa:SAUSA300_0530"/>
<dbReference type="HOGENOM" id="CLU_104295_1_2_9"/>
<dbReference type="OMA" id="VCIRVYT"/>
<dbReference type="Proteomes" id="UP000001939">
    <property type="component" value="Chromosome"/>
</dbReference>
<dbReference type="GO" id="GO:0015935">
    <property type="term" value="C:small ribosomal subunit"/>
    <property type="evidence" value="ECO:0007669"/>
    <property type="project" value="InterPro"/>
</dbReference>
<dbReference type="GO" id="GO:0019843">
    <property type="term" value="F:rRNA binding"/>
    <property type="evidence" value="ECO:0007669"/>
    <property type="project" value="UniProtKB-UniRule"/>
</dbReference>
<dbReference type="GO" id="GO:0003735">
    <property type="term" value="F:structural constituent of ribosome"/>
    <property type="evidence" value="ECO:0007669"/>
    <property type="project" value="InterPro"/>
</dbReference>
<dbReference type="GO" id="GO:0000049">
    <property type="term" value="F:tRNA binding"/>
    <property type="evidence" value="ECO:0007669"/>
    <property type="project" value="UniProtKB-UniRule"/>
</dbReference>
<dbReference type="GO" id="GO:0006412">
    <property type="term" value="P:translation"/>
    <property type="evidence" value="ECO:0007669"/>
    <property type="project" value="UniProtKB-UniRule"/>
</dbReference>
<dbReference type="CDD" id="cd03368">
    <property type="entry name" value="Ribosomal_S12"/>
    <property type="match status" value="1"/>
</dbReference>
<dbReference type="FunFam" id="2.40.50.140:FF:000001">
    <property type="entry name" value="30S ribosomal protein S12"/>
    <property type="match status" value="1"/>
</dbReference>
<dbReference type="Gene3D" id="2.40.50.140">
    <property type="entry name" value="Nucleic acid-binding proteins"/>
    <property type="match status" value="1"/>
</dbReference>
<dbReference type="HAMAP" id="MF_00403_B">
    <property type="entry name" value="Ribosomal_uS12_B"/>
    <property type="match status" value="1"/>
</dbReference>
<dbReference type="InterPro" id="IPR012340">
    <property type="entry name" value="NA-bd_OB-fold"/>
</dbReference>
<dbReference type="InterPro" id="IPR006032">
    <property type="entry name" value="Ribosomal_uS12"/>
</dbReference>
<dbReference type="InterPro" id="IPR005679">
    <property type="entry name" value="Ribosomal_uS12_bac"/>
</dbReference>
<dbReference type="NCBIfam" id="TIGR00981">
    <property type="entry name" value="rpsL_bact"/>
    <property type="match status" value="1"/>
</dbReference>
<dbReference type="PANTHER" id="PTHR11652">
    <property type="entry name" value="30S RIBOSOMAL PROTEIN S12 FAMILY MEMBER"/>
    <property type="match status" value="1"/>
</dbReference>
<dbReference type="Pfam" id="PF00164">
    <property type="entry name" value="Ribosom_S12_S23"/>
    <property type="match status" value="1"/>
</dbReference>
<dbReference type="PIRSF" id="PIRSF002133">
    <property type="entry name" value="Ribosomal_S12/S23"/>
    <property type="match status" value="1"/>
</dbReference>
<dbReference type="PRINTS" id="PR01034">
    <property type="entry name" value="RIBOSOMALS12"/>
</dbReference>
<dbReference type="SUPFAM" id="SSF50249">
    <property type="entry name" value="Nucleic acid-binding proteins"/>
    <property type="match status" value="1"/>
</dbReference>
<dbReference type="PROSITE" id="PS00055">
    <property type="entry name" value="RIBOSOMAL_S12"/>
    <property type="match status" value="1"/>
</dbReference>
<proteinExistence type="inferred from homology"/>
<protein>
    <recommendedName>
        <fullName evidence="2">Small ribosomal subunit protein uS12</fullName>
    </recommendedName>
    <alternativeName>
        <fullName evidence="4">30S ribosomal protein S12</fullName>
    </alternativeName>
</protein>
<reference key="1">
    <citation type="journal article" date="2006" name="Lancet">
        <title>Complete genome sequence of USA300, an epidemic clone of community-acquired meticillin-resistant Staphylococcus aureus.</title>
        <authorList>
            <person name="Diep B.A."/>
            <person name="Gill S.R."/>
            <person name="Chang R.F."/>
            <person name="Phan T.H."/>
            <person name="Chen J.H."/>
            <person name="Davidson M.G."/>
            <person name="Lin F."/>
            <person name="Lin J."/>
            <person name="Carleton H.A."/>
            <person name="Mongodin E.F."/>
            <person name="Sensabaugh G.F."/>
            <person name="Perdreau-Remington F."/>
        </authorList>
    </citation>
    <scope>NUCLEOTIDE SEQUENCE [LARGE SCALE GENOMIC DNA]</scope>
    <source>
        <strain>USA300</strain>
    </source>
</reference>
<evidence type="ECO:0000250" key="1"/>
<evidence type="ECO:0000255" key="2">
    <source>
        <dbReference type="HAMAP-Rule" id="MF_00403"/>
    </source>
</evidence>
<evidence type="ECO:0000256" key="3">
    <source>
        <dbReference type="SAM" id="MobiDB-lite"/>
    </source>
</evidence>
<evidence type="ECO:0000305" key="4"/>
<feature type="chain" id="PRO_0000238145" description="Small ribosomal subunit protein uS12">
    <location>
        <begin position="1"/>
        <end position="137"/>
    </location>
</feature>
<feature type="region of interest" description="Disordered" evidence="3">
    <location>
        <begin position="1"/>
        <end position="55"/>
    </location>
</feature>
<feature type="region of interest" description="Disordered" evidence="3">
    <location>
        <begin position="118"/>
        <end position="137"/>
    </location>
</feature>
<feature type="modified residue" description="3-methylthioaspartic acid" evidence="1">
    <location>
        <position position="102"/>
    </location>
</feature>
<organism>
    <name type="scientific">Staphylococcus aureus (strain USA300)</name>
    <dbReference type="NCBI Taxonomy" id="367830"/>
    <lineage>
        <taxon>Bacteria</taxon>
        <taxon>Bacillati</taxon>
        <taxon>Bacillota</taxon>
        <taxon>Bacilli</taxon>
        <taxon>Bacillales</taxon>
        <taxon>Staphylococcaceae</taxon>
        <taxon>Staphylococcus</taxon>
    </lineage>
</organism>
<name>RS12_STAA3</name>
<gene>
    <name evidence="2" type="primary">rpsL</name>
    <name type="ordered locus">SAUSA300_0530</name>
</gene>
<keyword id="KW-0488">Methylation</keyword>
<keyword id="KW-0687">Ribonucleoprotein</keyword>
<keyword id="KW-0689">Ribosomal protein</keyword>
<keyword id="KW-0694">RNA-binding</keyword>
<keyword id="KW-0699">rRNA-binding</keyword>
<keyword id="KW-0820">tRNA-binding</keyword>
<accession>Q2FJ95</accession>
<comment type="function">
    <text evidence="2">With S4 and S5 plays an important role in translational accuracy.</text>
</comment>
<comment type="function">
    <text evidence="2">Interacts with and stabilizes bases of the 16S rRNA that are involved in tRNA selection in the A site and with the mRNA backbone. Located at the interface of the 30S and 50S subunits, it traverses the body of the 30S subunit contacting proteins on the other side and probably holding the rRNA structure together. The combined cluster of proteins S8, S12 and S17 appears to hold together the shoulder and platform of the 30S subunit.</text>
</comment>
<comment type="subunit">
    <text evidence="2">Part of the 30S ribosomal subunit. Contacts proteins S8 and S17. May interact with IF1 in the 30S initiation complex.</text>
</comment>
<comment type="similarity">
    <text evidence="2">Belongs to the universal ribosomal protein uS12 family.</text>
</comment>
<sequence length="137" mass="15287">MPTINQLVRKPRQSKIKKSDSPALNKGFNSKKKKFTDLNSPQKRGVCTRVGTMTPKKPNSALRKYARVRLSNNIEINAYIPGIGHNLQEHSVVLVRGGRVKDLPGVRYHIVRGALDTSGVDGRRQGRSLYGTKKPKN</sequence>